<proteinExistence type="inferred from homology"/>
<evidence type="ECO:0000250" key="1">
    <source>
        <dbReference type="UniProtKB" id="P18558"/>
    </source>
</evidence>
<evidence type="ECO:0000255" key="2"/>
<evidence type="ECO:0000305" key="3"/>
<name>1104B_ASFL5</name>
<feature type="signal peptide" evidence="2">
    <location>
        <begin position="1"/>
        <end position="18"/>
    </location>
</feature>
<feature type="chain" id="PRO_0000036738" description="Protein MGF 110-4L-B">
    <location>
        <begin position="19"/>
        <end position="124"/>
    </location>
</feature>
<feature type="short sequence motif" description="Prevents secretion from ER" evidence="1">
    <location>
        <begin position="121"/>
        <end position="124"/>
    </location>
</feature>
<feature type="glycosylation site" description="N-linked (GlcNAc...) asparagine; by host" evidence="2">
    <location>
        <position position="64"/>
    </location>
</feature>
<sequence length="124" mass="14170">MLVIFLGILGLLANQVLGLPTQAGGHLRSTDNPPQEELGYWCTYMESCKFCWACAHGICKNKVNMSMPLIIENSYLTSCEVSRWYNQCTYSEGNGHYHVMDCSDPVPHNRPHRLLMKIYEKEDL</sequence>
<organism>
    <name type="scientific">African swine fever virus (isolate Portugal/Lis 57/1957)</name>
    <name type="common">ASFV</name>
    <dbReference type="NCBI Taxonomy" id="10499"/>
    <lineage>
        <taxon>Viruses</taxon>
        <taxon>Varidnaviria</taxon>
        <taxon>Bamfordvirae</taxon>
        <taxon>Nucleocytoviricota</taxon>
        <taxon>Pokkesviricetes</taxon>
        <taxon>Asfuvirales</taxon>
        <taxon>Asfarviridae</taxon>
        <taxon>Asfivirus</taxon>
        <taxon>African swine fever virus</taxon>
    </lineage>
</organism>
<gene>
    <name type="ORF">LIS124-2</name>
</gene>
<keyword id="KW-0244">Early protein</keyword>
<keyword id="KW-0325">Glycoprotein</keyword>
<keyword id="KW-0732">Signal</keyword>
<keyword id="KW-0946">Virion</keyword>
<accession>P26708</accession>
<reference key="1">
    <citation type="journal article" date="1990" name="Virology">
        <title>Genetic variation and multigene families in African swine fever virus.</title>
        <authorList>
            <person name="de la Vega I."/>
            <person name="Vinuela E."/>
            <person name="Blasco R."/>
        </authorList>
    </citation>
    <scope>NUCLEOTIDE SEQUENCE [GENOMIC DNA]</scope>
</reference>
<dbReference type="EMBL" id="M58155">
    <property type="protein sequence ID" value="AAA42717.1"/>
    <property type="molecule type" value="Genomic_DNA"/>
</dbReference>
<dbReference type="PIR" id="B36821">
    <property type="entry name" value="B36821"/>
</dbReference>
<dbReference type="GO" id="GO:0044172">
    <property type="term" value="C:host cell endoplasmic reticulum-Golgi intermediate compartment"/>
    <property type="evidence" value="ECO:0007669"/>
    <property type="project" value="UniProtKB-SubCell"/>
</dbReference>
<dbReference type="GO" id="GO:0044423">
    <property type="term" value="C:virion component"/>
    <property type="evidence" value="ECO:0007669"/>
    <property type="project" value="UniProtKB-KW"/>
</dbReference>
<dbReference type="InterPro" id="IPR004848">
    <property type="entry name" value="ASFV_fam_110"/>
</dbReference>
<dbReference type="Pfam" id="PF01639">
    <property type="entry name" value="v110"/>
    <property type="match status" value="1"/>
</dbReference>
<organismHost>
    <name type="scientific">Ornithodoros</name>
    <name type="common">relapsing fever ticks</name>
    <dbReference type="NCBI Taxonomy" id="6937"/>
</organismHost>
<organismHost>
    <name type="scientific">Sus scrofa</name>
    <name type="common">Pig</name>
    <dbReference type="NCBI Taxonomy" id="9823"/>
</organismHost>
<comment type="function">
    <text evidence="1">Causes the redistribution of lumenal ER protein to an enlarged ERGIC compartment.</text>
</comment>
<comment type="subcellular location">
    <subcellularLocation>
        <location evidence="1">Virion</location>
    </subcellularLocation>
    <subcellularLocation>
        <location evidence="1">Host endoplasmic reticulum-Golgi intermediate compartment</location>
    </subcellularLocation>
</comment>
<comment type="induction">
    <text evidence="3">Expressed in the early phase of the viral replicative cycle.</text>
</comment>
<comment type="similarity">
    <text evidence="3">Belongs to the asfivirus MGF 110 family.</text>
</comment>
<protein>
    <recommendedName>
        <fullName>Protein MGF 110-4L-B</fullName>
    </recommendedName>
</protein>